<feature type="chain" id="PRO_0000067548" description="Urease subunit alpha">
    <location>
        <begin position="1"/>
        <end position="15" status="greater than"/>
    </location>
</feature>
<feature type="non-terminal residue">
    <location>
        <position position="15"/>
    </location>
</feature>
<gene>
    <name type="primary">ureC</name>
</gene>
<organism>
    <name type="scientific">Morganella morganii</name>
    <name type="common">Proteus morganii</name>
    <dbReference type="NCBI Taxonomy" id="582"/>
    <lineage>
        <taxon>Bacteria</taxon>
        <taxon>Pseudomonadati</taxon>
        <taxon>Pseudomonadota</taxon>
        <taxon>Gammaproteobacteria</taxon>
        <taxon>Enterobacterales</taxon>
        <taxon>Morganellaceae</taxon>
        <taxon>Morganella</taxon>
    </lineage>
</organism>
<keyword id="KW-0963">Cytoplasm</keyword>
<keyword id="KW-0903">Direct protein sequencing</keyword>
<keyword id="KW-0378">Hydrolase</keyword>
<keyword id="KW-0479">Metal-binding</keyword>
<keyword id="KW-0533">Nickel</keyword>
<evidence type="ECO:0000250" key="1"/>
<evidence type="ECO:0000305" key="2"/>
<comment type="catalytic activity">
    <reaction>
        <text>urea + 2 H2O + H(+) = hydrogencarbonate + 2 NH4(+)</text>
        <dbReference type="Rhea" id="RHEA:20557"/>
        <dbReference type="ChEBI" id="CHEBI:15377"/>
        <dbReference type="ChEBI" id="CHEBI:15378"/>
        <dbReference type="ChEBI" id="CHEBI:16199"/>
        <dbReference type="ChEBI" id="CHEBI:17544"/>
        <dbReference type="ChEBI" id="CHEBI:28938"/>
        <dbReference type="EC" id="3.5.1.5"/>
    </reaction>
</comment>
<comment type="cofactor">
    <cofactor evidence="2">
        <name>Ni cation</name>
        <dbReference type="ChEBI" id="CHEBI:25516"/>
    </cofactor>
    <text evidence="2">Binds 2 nickel ions per subunit.</text>
</comment>
<comment type="pathway">
    <text>Nitrogen metabolism; urea degradation; CO(2) and NH(3) from urea (urease route): step 1/1.</text>
</comment>
<comment type="subunit">
    <text evidence="1">Heterotrimer of UreA (gamma), UreB (beta) and UreC (alpha) subunits. Three heterotrimers associate to form the active enzyme (By similarity).</text>
</comment>
<comment type="subcellular location">
    <subcellularLocation>
        <location evidence="1">Cytoplasm</location>
    </subcellularLocation>
</comment>
<comment type="similarity">
    <text evidence="2">Belongs to the metallo-dependent hydrolases superfamily. Urease alpha subunit family.</text>
</comment>
<sequence>PQISRQEYGGLFGPT</sequence>
<protein>
    <recommendedName>
        <fullName>Urease subunit alpha</fullName>
        <ecNumber>3.5.1.5</ecNumber>
    </recommendedName>
    <alternativeName>
        <fullName>Urea amidohydrolase subunit alpha</fullName>
    </alternativeName>
</protein>
<accession>P17337</accession>
<reference key="1">
    <citation type="journal article" date="1990" name="J. Bacteriol.">
        <title>Morganella morganii urease: purification, characterization, and isolation of gene sequences.</title>
        <authorList>
            <person name="Hu L.-T."/>
            <person name="Nicholson E.B."/>
            <person name="Jones B.D."/>
            <person name="Lynch M.J."/>
            <person name="Mobley H.L.T."/>
        </authorList>
    </citation>
    <scope>PROTEIN SEQUENCE</scope>
</reference>
<proteinExistence type="evidence at protein level"/>
<dbReference type="EC" id="3.5.1.5"/>
<dbReference type="PIR" id="A35389">
    <property type="entry name" value="A35389"/>
</dbReference>
<dbReference type="STRING" id="582.AL531_17690"/>
<dbReference type="UniPathway" id="UPA00258">
    <property type="reaction ID" value="UER00370"/>
</dbReference>
<dbReference type="GO" id="GO:0005737">
    <property type="term" value="C:cytoplasm"/>
    <property type="evidence" value="ECO:0007669"/>
    <property type="project" value="UniProtKB-SubCell"/>
</dbReference>
<dbReference type="GO" id="GO:0046872">
    <property type="term" value="F:metal ion binding"/>
    <property type="evidence" value="ECO:0007669"/>
    <property type="project" value="UniProtKB-KW"/>
</dbReference>
<dbReference type="GO" id="GO:0009039">
    <property type="term" value="F:urease activity"/>
    <property type="evidence" value="ECO:0007669"/>
    <property type="project" value="UniProtKB-EC"/>
</dbReference>
<dbReference type="GO" id="GO:0043419">
    <property type="term" value="P:urea catabolic process"/>
    <property type="evidence" value="ECO:0007669"/>
    <property type="project" value="UniProtKB-UniPathway"/>
</dbReference>
<name>URE1_MORMO</name>